<name>RL22_BACCR</name>
<organism>
    <name type="scientific">Bacillus cereus (strain ATCC 14579 / DSM 31 / CCUG 7414 / JCM 2152 / NBRC 15305 / NCIMB 9373 / NCTC 2599 / NRRL B-3711)</name>
    <dbReference type="NCBI Taxonomy" id="226900"/>
    <lineage>
        <taxon>Bacteria</taxon>
        <taxon>Bacillati</taxon>
        <taxon>Bacillota</taxon>
        <taxon>Bacilli</taxon>
        <taxon>Bacillales</taxon>
        <taxon>Bacillaceae</taxon>
        <taxon>Bacillus</taxon>
        <taxon>Bacillus cereus group</taxon>
    </lineage>
</organism>
<proteinExistence type="inferred from homology"/>
<gene>
    <name evidence="1" type="primary">rplV</name>
    <name type="ordered locus">BC_0136</name>
</gene>
<dbReference type="EMBL" id="AE016877">
    <property type="protein sequence ID" value="AAP07217.1"/>
    <property type="status" value="ALT_INIT"/>
    <property type="molecule type" value="Genomic_DNA"/>
</dbReference>
<dbReference type="RefSeq" id="NP_830016.1">
    <property type="nucleotide sequence ID" value="NC_004722.1"/>
</dbReference>
<dbReference type="RefSeq" id="WP_001148024.1">
    <property type="nucleotide sequence ID" value="NZ_CP138336.1"/>
</dbReference>
<dbReference type="SMR" id="Q81J37"/>
<dbReference type="STRING" id="226900.BC_0136"/>
<dbReference type="MetOSite" id="Q81J37"/>
<dbReference type="GeneID" id="92887808"/>
<dbReference type="KEGG" id="bce:BC0136"/>
<dbReference type="PATRIC" id="fig|226900.8.peg.137"/>
<dbReference type="HOGENOM" id="CLU_083987_3_3_9"/>
<dbReference type="OrthoDB" id="9805969at2"/>
<dbReference type="Proteomes" id="UP000001417">
    <property type="component" value="Chromosome"/>
</dbReference>
<dbReference type="GO" id="GO:0022625">
    <property type="term" value="C:cytosolic large ribosomal subunit"/>
    <property type="evidence" value="ECO:0000318"/>
    <property type="project" value="GO_Central"/>
</dbReference>
<dbReference type="GO" id="GO:0019843">
    <property type="term" value="F:rRNA binding"/>
    <property type="evidence" value="ECO:0007669"/>
    <property type="project" value="UniProtKB-UniRule"/>
</dbReference>
<dbReference type="GO" id="GO:0003735">
    <property type="term" value="F:structural constituent of ribosome"/>
    <property type="evidence" value="ECO:0000318"/>
    <property type="project" value="GO_Central"/>
</dbReference>
<dbReference type="GO" id="GO:0006412">
    <property type="term" value="P:translation"/>
    <property type="evidence" value="ECO:0000318"/>
    <property type="project" value="GO_Central"/>
</dbReference>
<dbReference type="CDD" id="cd00336">
    <property type="entry name" value="Ribosomal_L22"/>
    <property type="match status" value="1"/>
</dbReference>
<dbReference type="FunFam" id="3.90.470.10:FF:000001">
    <property type="entry name" value="50S ribosomal protein L22"/>
    <property type="match status" value="1"/>
</dbReference>
<dbReference type="Gene3D" id="3.90.470.10">
    <property type="entry name" value="Ribosomal protein L22/L17"/>
    <property type="match status" value="1"/>
</dbReference>
<dbReference type="HAMAP" id="MF_01331_B">
    <property type="entry name" value="Ribosomal_uL22_B"/>
    <property type="match status" value="1"/>
</dbReference>
<dbReference type="InterPro" id="IPR001063">
    <property type="entry name" value="Ribosomal_uL22"/>
</dbReference>
<dbReference type="InterPro" id="IPR005727">
    <property type="entry name" value="Ribosomal_uL22_bac/chlpt-type"/>
</dbReference>
<dbReference type="InterPro" id="IPR047867">
    <property type="entry name" value="Ribosomal_uL22_bac/org-type"/>
</dbReference>
<dbReference type="InterPro" id="IPR018260">
    <property type="entry name" value="Ribosomal_uL22_CS"/>
</dbReference>
<dbReference type="InterPro" id="IPR036394">
    <property type="entry name" value="Ribosomal_uL22_sf"/>
</dbReference>
<dbReference type="NCBIfam" id="TIGR01044">
    <property type="entry name" value="rplV_bact"/>
    <property type="match status" value="1"/>
</dbReference>
<dbReference type="PANTHER" id="PTHR13501">
    <property type="entry name" value="CHLOROPLAST 50S RIBOSOMAL PROTEIN L22-RELATED"/>
    <property type="match status" value="1"/>
</dbReference>
<dbReference type="PANTHER" id="PTHR13501:SF8">
    <property type="entry name" value="LARGE RIBOSOMAL SUBUNIT PROTEIN UL22M"/>
    <property type="match status" value="1"/>
</dbReference>
<dbReference type="Pfam" id="PF00237">
    <property type="entry name" value="Ribosomal_L22"/>
    <property type="match status" value="1"/>
</dbReference>
<dbReference type="SUPFAM" id="SSF54843">
    <property type="entry name" value="Ribosomal protein L22"/>
    <property type="match status" value="1"/>
</dbReference>
<dbReference type="PROSITE" id="PS00464">
    <property type="entry name" value="RIBOSOMAL_L22"/>
    <property type="match status" value="1"/>
</dbReference>
<sequence length="113" mass="12536">MQAKAVARTVRIAPRKVRLVVDLIRGKQVGEAIAILNHTPKTASPVVEKVLKSAIANAEHNYEMDINNLVVEKVFVDEGPTLKRFRPRAMGRASQINKRTSHITVVVSEKKEG</sequence>
<accession>Q81J37</accession>
<protein>
    <recommendedName>
        <fullName evidence="1">Large ribosomal subunit protein uL22</fullName>
    </recommendedName>
    <alternativeName>
        <fullName evidence="2">50S ribosomal protein L22</fullName>
    </alternativeName>
</protein>
<feature type="chain" id="PRO_0000125116" description="Large ribosomal subunit protein uL22">
    <location>
        <begin position="1"/>
        <end position="113"/>
    </location>
</feature>
<evidence type="ECO:0000255" key="1">
    <source>
        <dbReference type="HAMAP-Rule" id="MF_01331"/>
    </source>
</evidence>
<evidence type="ECO:0000305" key="2"/>
<reference key="1">
    <citation type="journal article" date="2003" name="Nature">
        <title>Genome sequence of Bacillus cereus and comparative analysis with Bacillus anthracis.</title>
        <authorList>
            <person name="Ivanova N."/>
            <person name="Sorokin A."/>
            <person name="Anderson I."/>
            <person name="Galleron N."/>
            <person name="Candelon B."/>
            <person name="Kapatral V."/>
            <person name="Bhattacharyya A."/>
            <person name="Reznik G."/>
            <person name="Mikhailova N."/>
            <person name="Lapidus A."/>
            <person name="Chu L."/>
            <person name="Mazur M."/>
            <person name="Goltsman E."/>
            <person name="Larsen N."/>
            <person name="D'Souza M."/>
            <person name="Walunas T."/>
            <person name="Grechkin Y."/>
            <person name="Pusch G."/>
            <person name="Haselkorn R."/>
            <person name="Fonstein M."/>
            <person name="Ehrlich S.D."/>
            <person name="Overbeek R."/>
            <person name="Kyrpides N.C."/>
        </authorList>
    </citation>
    <scope>NUCLEOTIDE SEQUENCE [LARGE SCALE GENOMIC DNA]</scope>
    <source>
        <strain>ATCC 14579 / DSM 31 / CCUG 7414 / JCM 2152 / NBRC 15305 / NCIMB 9373 / NCTC 2599 / NRRL B-3711</strain>
    </source>
</reference>
<comment type="function">
    <text evidence="1">This protein binds specifically to 23S rRNA; its binding is stimulated by other ribosomal proteins, e.g. L4, L17, and L20. It is important during the early stages of 50S assembly. It makes multiple contacts with different domains of the 23S rRNA in the assembled 50S subunit and ribosome (By similarity).</text>
</comment>
<comment type="function">
    <text evidence="1">The globular domain of the protein is located near the polypeptide exit tunnel on the outside of the subunit, while an extended beta-hairpin is found that lines the wall of the exit tunnel in the center of the 70S ribosome.</text>
</comment>
<comment type="subunit">
    <text evidence="1">Part of the 50S ribosomal subunit.</text>
</comment>
<comment type="similarity">
    <text evidence="1">Belongs to the universal ribosomal protein uL22 family.</text>
</comment>
<comment type="sequence caution" evidence="2">
    <conflict type="erroneous initiation">
        <sequence resource="EMBL-CDS" id="AAP07217"/>
    </conflict>
</comment>
<keyword id="KW-1185">Reference proteome</keyword>
<keyword id="KW-0687">Ribonucleoprotein</keyword>
<keyword id="KW-0689">Ribosomal protein</keyword>
<keyword id="KW-0694">RNA-binding</keyword>
<keyword id="KW-0699">rRNA-binding</keyword>